<protein>
    <recommendedName>
        <fullName>Bromodomain adjacent to zinc finger domain protein 1A</fullName>
    </recommendedName>
    <alternativeName>
        <fullName>ATP-dependent chromatin-remodeling protein</fullName>
    </alternativeName>
    <alternativeName>
        <fullName>ATP-utilizing chromatin assembly and remodeling factor 1</fullName>
        <shortName>hACF1</shortName>
    </alternativeName>
    <alternativeName>
        <fullName>CHRAC subunit ACF1</fullName>
    </alternativeName>
    <alternativeName>
        <fullName>Williams syndrome transcription factor-related chromatin-remodeling factor 180</fullName>
        <shortName>WCRF180</shortName>
    </alternativeName>
    <alternativeName>
        <fullName>hWALp1</fullName>
    </alternativeName>
</protein>
<dbReference type="EMBL" id="AF213467">
    <property type="protein sequence ID" value="AAF70601.1"/>
    <property type="molecule type" value="mRNA"/>
</dbReference>
<dbReference type="EMBL" id="AF221130">
    <property type="protein sequence ID" value="AAF32366.1"/>
    <property type="molecule type" value="mRNA"/>
</dbReference>
<dbReference type="EMBL" id="AB032252">
    <property type="protein sequence ID" value="BAA89209.1"/>
    <property type="molecule type" value="mRNA"/>
</dbReference>
<dbReference type="EMBL" id="AL121603">
    <property type="status" value="NOT_ANNOTATED_CDS"/>
    <property type="molecule type" value="Genomic_DNA"/>
</dbReference>
<dbReference type="EMBL" id="AL355885">
    <property type="status" value="NOT_ANNOTATED_CDS"/>
    <property type="molecule type" value="Genomic_DNA"/>
</dbReference>
<dbReference type="EMBL" id="CH471078">
    <property type="protein sequence ID" value="EAW65900.1"/>
    <property type="molecule type" value="Genomic_DNA"/>
</dbReference>
<dbReference type="EMBL" id="AF161435">
    <property type="protein sequence ID" value="AAF28995.1"/>
    <property type="status" value="ALT_FRAME"/>
    <property type="molecule type" value="mRNA"/>
</dbReference>
<dbReference type="EMBL" id="AL050089">
    <property type="protein sequence ID" value="CAB43261.1"/>
    <property type="molecule type" value="mRNA"/>
</dbReference>
<dbReference type="CCDS" id="CCDS41943.1">
    <molecule id="Q9NRL2-2"/>
</dbReference>
<dbReference type="CCDS" id="CCDS9651.1">
    <molecule id="Q9NRL2-1"/>
</dbReference>
<dbReference type="PIR" id="T08738">
    <property type="entry name" value="T08738"/>
</dbReference>
<dbReference type="RefSeq" id="NP_038476.2">
    <molecule id="Q9NRL2-1"/>
    <property type="nucleotide sequence ID" value="NM_013448.2"/>
</dbReference>
<dbReference type="RefSeq" id="NP_872589.1">
    <molecule id="Q9NRL2-2"/>
    <property type="nucleotide sequence ID" value="NM_182648.2"/>
</dbReference>
<dbReference type="RefSeq" id="XP_024305228.1">
    <molecule id="Q9NRL2-1"/>
    <property type="nucleotide sequence ID" value="XM_024449460.2"/>
</dbReference>
<dbReference type="RefSeq" id="XP_047286843.1">
    <molecule id="Q9NRL2-2"/>
    <property type="nucleotide sequence ID" value="XM_047430887.1"/>
</dbReference>
<dbReference type="RefSeq" id="XP_054231271.1">
    <molecule id="Q9NRL2-1"/>
    <property type="nucleotide sequence ID" value="XM_054375296.1"/>
</dbReference>
<dbReference type="RefSeq" id="XP_054231272.1">
    <molecule id="Q9NRL2-2"/>
    <property type="nucleotide sequence ID" value="XM_054375297.1"/>
</dbReference>
<dbReference type="PDB" id="5UIY">
    <property type="method" value="X-ray"/>
    <property type="resolution" value="1.69 A"/>
    <property type="chains" value="A/B/C/D=1425-1538"/>
</dbReference>
<dbReference type="PDBsum" id="5UIY"/>
<dbReference type="SMR" id="Q9NRL2"/>
<dbReference type="BioGRID" id="116347">
    <property type="interactions" value="159"/>
</dbReference>
<dbReference type="ComplexPortal" id="CPX-434">
    <property type="entry name" value="ACF chromatin remodeling complex"/>
</dbReference>
<dbReference type="ComplexPortal" id="CPX-785">
    <property type="entry name" value="CHRAC chromatin remodeling complex"/>
</dbReference>
<dbReference type="CORUM" id="Q9NRL2"/>
<dbReference type="DIP" id="DIP-36071N"/>
<dbReference type="FunCoup" id="Q9NRL2">
    <property type="interactions" value="1557"/>
</dbReference>
<dbReference type="IntAct" id="Q9NRL2">
    <property type="interactions" value="79"/>
</dbReference>
<dbReference type="MINT" id="Q9NRL2"/>
<dbReference type="STRING" id="9606.ENSP00000371859"/>
<dbReference type="BindingDB" id="Q9NRL2"/>
<dbReference type="ChEMBL" id="CHEMBL4105737"/>
<dbReference type="GlyGen" id="Q9NRL2">
    <property type="glycosylation" value="2 sites, 1 O-linked glycan (1 site)"/>
</dbReference>
<dbReference type="iPTMnet" id="Q9NRL2"/>
<dbReference type="MetOSite" id="Q9NRL2"/>
<dbReference type="PhosphoSitePlus" id="Q9NRL2"/>
<dbReference type="SwissPalm" id="Q9NRL2"/>
<dbReference type="BioMuta" id="BAZ1A"/>
<dbReference type="DMDM" id="116241266"/>
<dbReference type="jPOST" id="Q9NRL2"/>
<dbReference type="MassIVE" id="Q9NRL2"/>
<dbReference type="PaxDb" id="9606-ENSP00000353458"/>
<dbReference type="PeptideAtlas" id="Q9NRL2"/>
<dbReference type="ProteomicsDB" id="82383">
    <molecule id="Q9NRL2-1"/>
</dbReference>
<dbReference type="ProteomicsDB" id="82384">
    <molecule id="Q9NRL2-2"/>
</dbReference>
<dbReference type="Pumba" id="Q9NRL2"/>
<dbReference type="Antibodypedia" id="113">
    <property type="antibodies" value="142 antibodies from 26 providers"/>
</dbReference>
<dbReference type="DNASU" id="11177"/>
<dbReference type="Ensembl" id="ENST00000358716.8">
    <molecule id="Q9NRL2-2"/>
    <property type="protein sequence ID" value="ENSP00000351555.4"/>
    <property type="gene ID" value="ENSG00000198604.11"/>
</dbReference>
<dbReference type="Ensembl" id="ENST00000360310.6">
    <molecule id="Q9NRL2-1"/>
    <property type="protein sequence ID" value="ENSP00000353458.1"/>
    <property type="gene ID" value="ENSG00000198604.11"/>
</dbReference>
<dbReference type="Ensembl" id="ENST00000382422.6">
    <molecule id="Q9NRL2-1"/>
    <property type="protein sequence ID" value="ENSP00000371859.2"/>
    <property type="gene ID" value="ENSG00000198604.11"/>
</dbReference>
<dbReference type="GeneID" id="11177"/>
<dbReference type="KEGG" id="hsa:11177"/>
<dbReference type="MANE-Select" id="ENST00000360310.6">
    <property type="protein sequence ID" value="ENSP00000353458.1"/>
    <property type="RefSeq nucleotide sequence ID" value="NM_013448.3"/>
    <property type="RefSeq protein sequence ID" value="NP_038476.2"/>
</dbReference>
<dbReference type="UCSC" id="uc001wsk.4">
    <molecule id="Q9NRL2-1"/>
    <property type="organism name" value="human"/>
</dbReference>
<dbReference type="AGR" id="HGNC:960"/>
<dbReference type="CTD" id="11177"/>
<dbReference type="DisGeNET" id="11177"/>
<dbReference type="GeneCards" id="BAZ1A"/>
<dbReference type="HGNC" id="HGNC:960">
    <property type="gene designation" value="BAZ1A"/>
</dbReference>
<dbReference type="HPA" id="ENSG00000198604">
    <property type="expression patterns" value="Tissue enhanced (bone)"/>
</dbReference>
<dbReference type="MalaCards" id="BAZ1A"/>
<dbReference type="MIM" id="605680">
    <property type="type" value="gene"/>
</dbReference>
<dbReference type="neXtProt" id="NX_Q9NRL2"/>
<dbReference type="OpenTargets" id="ENSG00000198604"/>
<dbReference type="PharmGKB" id="PA25270"/>
<dbReference type="VEuPathDB" id="HostDB:ENSG00000198604"/>
<dbReference type="eggNOG" id="KOG1245">
    <property type="taxonomic scope" value="Eukaryota"/>
</dbReference>
<dbReference type="GeneTree" id="ENSGT00940000158135"/>
<dbReference type="HOGENOM" id="CLU_002479_1_0_1"/>
<dbReference type="InParanoid" id="Q9NRL2"/>
<dbReference type="OMA" id="NDLVFCC"/>
<dbReference type="OrthoDB" id="332390at2759"/>
<dbReference type="PAN-GO" id="Q9NRL2">
    <property type="GO annotations" value="6 GO annotations based on evolutionary models"/>
</dbReference>
<dbReference type="PhylomeDB" id="Q9NRL2"/>
<dbReference type="TreeFam" id="TF316326"/>
<dbReference type="PathwayCommons" id="Q9NRL2"/>
<dbReference type="SignaLink" id="Q9NRL2"/>
<dbReference type="BioGRID-ORCS" id="11177">
    <property type="hits" value="28 hits in 1191 CRISPR screens"/>
</dbReference>
<dbReference type="ChiTaRS" id="BAZ1A">
    <property type="organism name" value="human"/>
</dbReference>
<dbReference type="GenomeRNAi" id="11177"/>
<dbReference type="Pharos" id="Q9NRL2">
    <property type="development level" value="Tchem"/>
</dbReference>
<dbReference type="PRO" id="PR:Q9NRL2"/>
<dbReference type="Proteomes" id="UP000005640">
    <property type="component" value="Chromosome 14"/>
</dbReference>
<dbReference type="RNAct" id="Q9NRL2">
    <property type="molecule type" value="protein"/>
</dbReference>
<dbReference type="Bgee" id="ENSG00000198604">
    <property type="expression patterns" value="Expressed in sperm and 196 other cell types or tissues"/>
</dbReference>
<dbReference type="ExpressionAtlas" id="Q9NRL2">
    <property type="expression patterns" value="baseline and differential"/>
</dbReference>
<dbReference type="GO" id="GO:0016590">
    <property type="term" value="C:ACF complex"/>
    <property type="evidence" value="ECO:0000353"/>
    <property type="project" value="ComplexPortal"/>
</dbReference>
<dbReference type="GO" id="GO:0008623">
    <property type="term" value="C:CHRAC"/>
    <property type="evidence" value="ECO:0000314"/>
    <property type="project" value="UniProtKB"/>
</dbReference>
<dbReference type="GO" id="GO:0000228">
    <property type="term" value="C:nuclear chromosome"/>
    <property type="evidence" value="ECO:0000318"/>
    <property type="project" value="GO_Central"/>
</dbReference>
<dbReference type="GO" id="GO:0005634">
    <property type="term" value="C:nucleus"/>
    <property type="evidence" value="ECO:0000314"/>
    <property type="project" value="UniProtKB"/>
</dbReference>
<dbReference type="GO" id="GO:0005721">
    <property type="term" value="C:pericentric heterochromatin"/>
    <property type="evidence" value="ECO:0000269"/>
    <property type="project" value="ComplexPortal"/>
</dbReference>
<dbReference type="GO" id="GO:0003677">
    <property type="term" value="F:DNA binding"/>
    <property type="evidence" value="ECO:0000318"/>
    <property type="project" value="GO_Central"/>
</dbReference>
<dbReference type="GO" id="GO:0008270">
    <property type="term" value="F:zinc ion binding"/>
    <property type="evidence" value="ECO:0007669"/>
    <property type="project" value="UniProtKB-KW"/>
</dbReference>
<dbReference type="GO" id="GO:0006338">
    <property type="term" value="P:chromatin remodeling"/>
    <property type="evidence" value="ECO:0000314"/>
    <property type="project" value="ComplexPortal"/>
</dbReference>
<dbReference type="GO" id="GO:0006261">
    <property type="term" value="P:DNA-templated DNA replication"/>
    <property type="evidence" value="ECO:0000314"/>
    <property type="project" value="UniProtKB"/>
</dbReference>
<dbReference type="GO" id="GO:0006334">
    <property type="term" value="P:nucleosome assembly"/>
    <property type="evidence" value="ECO:0000314"/>
    <property type="project" value="ComplexPortal"/>
</dbReference>
<dbReference type="GO" id="GO:0045740">
    <property type="term" value="P:positive regulation of DNA replication"/>
    <property type="evidence" value="ECO:0000315"/>
    <property type="project" value="ComplexPortal"/>
</dbReference>
<dbReference type="GO" id="GO:0006275">
    <property type="term" value="P:regulation of DNA replication"/>
    <property type="evidence" value="ECO:0000315"/>
    <property type="project" value="ComplexPortal"/>
</dbReference>
<dbReference type="GO" id="GO:0006355">
    <property type="term" value="P:regulation of DNA-templated transcription"/>
    <property type="evidence" value="ECO:0000318"/>
    <property type="project" value="GO_Central"/>
</dbReference>
<dbReference type="GO" id="GO:0031445">
    <property type="term" value="P:regulation of heterochromatin formation"/>
    <property type="evidence" value="ECO:0000318"/>
    <property type="project" value="GO_Central"/>
</dbReference>
<dbReference type="GO" id="GO:0006357">
    <property type="term" value="P:regulation of transcription by RNA polymerase II"/>
    <property type="evidence" value="ECO:0000303"/>
    <property type="project" value="BHF-UCL"/>
</dbReference>
<dbReference type="CDD" id="cd05504">
    <property type="entry name" value="Bromo_Acf1_like"/>
    <property type="match status" value="1"/>
</dbReference>
<dbReference type="CDD" id="cd15627">
    <property type="entry name" value="PHD_BAZ1A"/>
    <property type="match status" value="1"/>
</dbReference>
<dbReference type="FunFam" id="1.20.920.10:FF:000029">
    <property type="entry name" value="Bromodomain adjacent to zinc finger domain protein 1A"/>
    <property type="match status" value="1"/>
</dbReference>
<dbReference type="FunFam" id="3.30.40.10:FF:000300">
    <property type="entry name" value="Bromodomain adjacent to zinc finger domain protein 1A"/>
    <property type="match status" value="1"/>
</dbReference>
<dbReference type="Gene3D" id="1.20.920.10">
    <property type="entry name" value="Bromodomain-like"/>
    <property type="match status" value="1"/>
</dbReference>
<dbReference type="Gene3D" id="3.30.40.10">
    <property type="entry name" value="Zinc/RING finger domain, C3HC4 (zinc finger)"/>
    <property type="match status" value="1"/>
</dbReference>
<dbReference type="InterPro" id="IPR037325">
    <property type="entry name" value="Acf1_Bromo"/>
</dbReference>
<dbReference type="InterPro" id="IPR047171">
    <property type="entry name" value="BAZ1A"/>
</dbReference>
<dbReference type="InterPro" id="IPR001487">
    <property type="entry name" value="Bromodomain"/>
</dbReference>
<dbReference type="InterPro" id="IPR036427">
    <property type="entry name" value="Bromodomain-like_sf"/>
</dbReference>
<dbReference type="InterPro" id="IPR018359">
    <property type="entry name" value="Bromodomain_CS"/>
</dbReference>
<dbReference type="InterPro" id="IPR018501">
    <property type="entry name" value="DDT_dom"/>
</dbReference>
<dbReference type="InterPro" id="IPR028942">
    <property type="entry name" value="WHIM1_dom"/>
</dbReference>
<dbReference type="InterPro" id="IPR028941">
    <property type="entry name" value="WHIM2_dom"/>
</dbReference>
<dbReference type="InterPro" id="IPR013136">
    <property type="entry name" value="WSTF_Acf1_Cbp146"/>
</dbReference>
<dbReference type="InterPro" id="IPR019786">
    <property type="entry name" value="Zinc_finger_PHD-type_CS"/>
</dbReference>
<dbReference type="InterPro" id="IPR011011">
    <property type="entry name" value="Znf_FYVE_PHD"/>
</dbReference>
<dbReference type="InterPro" id="IPR001965">
    <property type="entry name" value="Znf_PHD"/>
</dbReference>
<dbReference type="InterPro" id="IPR019787">
    <property type="entry name" value="Znf_PHD-finger"/>
</dbReference>
<dbReference type="InterPro" id="IPR013083">
    <property type="entry name" value="Znf_RING/FYVE/PHD"/>
</dbReference>
<dbReference type="PANTHER" id="PTHR46510">
    <property type="entry name" value="BROMODOMAIN ADJACENT TO ZINC FINGER DOMAIN PROTEIN 1A"/>
    <property type="match status" value="1"/>
</dbReference>
<dbReference type="PANTHER" id="PTHR46510:SF1">
    <property type="entry name" value="BROMODOMAIN ADJACENT TO ZINC FINGER DOMAIN PROTEIN 1A"/>
    <property type="match status" value="1"/>
</dbReference>
<dbReference type="Pfam" id="PF00439">
    <property type="entry name" value="Bromodomain"/>
    <property type="match status" value="1"/>
</dbReference>
<dbReference type="Pfam" id="PF02791">
    <property type="entry name" value="DDT"/>
    <property type="match status" value="1"/>
</dbReference>
<dbReference type="Pfam" id="PF00628">
    <property type="entry name" value="PHD"/>
    <property type="match status" value="1"/>
</dbReference>
<dbReference type="Pfam" id="PF10537">
    <property type="entry name" value="WAC_Acf1_DNA_bd"/>
    <property type="match status" value="1"/>
</dbReference>
<dbReference type="Pfam" id="PF15612">
    <property type="entry name" value="WHIM1"/>
    <property type="match status" value="1"/>
</dbReference>
<dbReference type="Pfam" id="PF15613">
    <property type="entry name" value="WSD"/>
    <property type="match status" value="1"/>
</dbReference>
<dbReference type="PRINTS" id="PR00503">
    <property type="entry name" value="BROMODOMAIN"/>
</dbReference>
<dbReference type="SMART" id="SM00297">
    <property type="entry name" value="BROMO"/>
    <property type="match status" value="1"/>
</dbReference>
<dbReference type="SMART" id="SM00571">
    <property type="entry name" value="DDT"/>
    <property type="match status" value="1"/>
</dbReference>
<dbReference type="SMART" id="SM00249">
    <property type="entry name" value="PHD"/>
    <property type="match status" value="1"/>
</dbReference>
<dbReference type="SUPFAM" id="SSF47370">
    <property type="entry name" value="Bromodomain"/>
    <property type="match status" value="1"/>
</dbReference>
<dbReference type="SUPFAM" id="SSF57903">
    <property type="entry name" value="FYVE/PHD zinc finger"/>
    <property type="match status" value="1"/>
</dbReference>
<dbReference type="PROSITE" id="PS00633">
    <property type="entry name" value="BROMODOMAIN_1"/>
    <property type="match status" value="1"/>
</dbReference>
<dbReference type="PROSITE" id="PS50014">
    <property type="entry name" value="BROMODOMAIN_2"/>
    <property type="match status" value="1"/>
</dbReference>
<dbReference type="PROSITE" id="PS50827">
    <property type="entry name" value="DDT"/>
    <property type="match status" value="1"/>
</dbReference>
<dbReference type="PROSITE" id="PS51136">
    <property type="entry name" value="WAC"/>
    <property type="match status" value="1"/>
</dbReference>
<dbReference type="PROSITE" id="PS01359">
    <property type="entry name" value="ZF_PHD_1"/>
    <property type="match status" value="1"/>
</dbReference>
<dbReference type="PROSITE" id="PS50016">
    <property type="entry name" value="ZF_PHD_2"/>
    <property type="match status" value="1"/>
</dbReference>
<name>BAZ1A_HUMAN</name>
<keyword id="KW-0002">3D-structure</keyword>
<keyword id="KW-0025">Alternative splicing</keyword>
<keyword id="KW-0103">Bromodomain</keyword>
<keyword id="KW-0175">Coiled coil</keyword>
<keyword id="KW-1017">Isopeptide bond</keyword>
<keyword id="KW-0479">Metal-binding</keyword>
<keyword id="KW-0539">Nucleus</keyword>
<keyword id="KW-0597">Phosphoprotein</keyword>
<keyword id="KW-1267">Proteomics identification</keyword>
<keyword id="KW-1185">Reference proteome</keyword>
<keyword id="KW-0804">Transcription</keyword>
<keyword id="KW-0805">Transcription regulation</keyword>
<keyword id="KW-0832">Ubl conjugation</keyword>
<keyword id="KW-0862">Zinc</keyword>
<keyword id="KW-0863">Zinc-finger</keyword>
<accession>Q9NRL2</accession>
<accession>Q9NZ15</accession>
<accession>Q9P065</accession>
<accession>Q9UIG1</accession>
<accession>Q9Y3V3</accession>
<gene>
    <name type="primary">BAZ1A</name>
    <name type="synonym">ACF1</name>
    <name type="synonym">WCRF180</name>
    <name type="ORF">HSPC317</name>
</gene>
<sequence length="1556" mass="178702">MPLLHRKPFVRQKPPADLRPDEEVFYCKVTNEIFRHYDDFFERTILCNSLVWSCAVTGRPGLTYQEALESEKKARQNLQSFPEPLIIPVLYLTSLTHRSRLHEICDDIFAYVKDRYFVEETVEVIRNNGARLQCRILEVLPPSHQNGFANGHVNSVDGETIIISDSDDSETQSCSFQNGKKKDAIDPLLFKYKVQPTKKELHESAIVKATQISRRKHLFSRDKLKLFLKQHCEPQDGVIKIKASSLSTYKIAEQDFSYFFPDDPPTFIFSPANRRRGRPPKRIHISQEDNVANKQTLASYRSKATKERDKLLKQEEMKSLAFEKAKLKREKADALEAKKKEKEDKEKKREELKKIVEEERLKKKEEKERLKVEREKEREKLREEKRKYVEYLKQWSKPREDMECDDLKELPEPTPVKTRLPPEIFGDALMVLEFLNAFGELFDLQDEFPDGVTLEVLEEALVGNDSEGPLCELLFFFLTAIFQAIAEEEEEVAKEQLTDADTKDLTEALDEDADPTKSALSAVASLAAAWPQLHQGCSLKSLDLDSCTLSEILRLHILASGADVTSANAKYRYQKRGGFDATDDACMELRLSNPSLVKKLSSTSVYDLTPGEKMKILHALCGKLLTLVSTRDFIEDYVDILRQAKQEFRELKAEQHRKEREEAAARIRKRKEEKLKEQEQKMKEKQEKLKEDEQRNSTADISIGEEEREDFDTSIESKDTEQKELDQDMVTEDEDDPGSHKRGRRGKRGQNGFKEFTRQEQINCVTREPLTADEEEALKQEHQRKEKELLEKIQSAIACTNIFPLGRDRMYRRYWIFPSIPGLFIEEDYSGLTEDMLLPRPSSFQNNVQSQDPQVSTKTGEPLMSESTSNIDQGPRDHSVQLPKPVHKPNRWCFYSSCEQLDQLIEALNSRGHRESALKETLLQEKSRICAQLARFSEEKFHFSDKPQPDSKPTYSRGRSSNAYDPSQMCAEKQLELRLRDFLLDIEDRIYQGTLGAIKVTDRHIWRSALESGRYELLSEENKENGIIKTVNEDVEEMEIDEQTKVIVKDRLLGIKTETPSTVSTNASTPQSVSSVVHYLAMALFQIEQGIERRFLKAPLDASDSGRSYKTVLDRWRESLLSSASLSQVFLHLSTLDRSVIWSKSILNARCKICRKKGDAENMVLCDGCDRGHHTYCVRPKLKTVPEGDWFCPECRPKQRSRRLSSRQRPSLESDEDVEDSMGGEDDEVDGDEEEGQSEEEEYEVEQDEDDSQEEEEVSLPKRGRPQVRLPVKTRGKLSSSFSSRGQQQEPGRYPSRSQQSTPKTTVSSKTGRSLRKINSAPPTETKSLRIASRSTRHSHGPLQADVFVELLSPRRKRRGRKSANNTPENSPNFPNFRVIATKSSEQSRSVNIASKLSLQESESKRRCRKRQSPEPSPVTLGRRSSGRQGGVHELSAFEQLVVELVRHDDSWPFLKLVSKIQVPDYYDIIKKPIALNIIREKVNKCEYKLASEFIDDIELMFSNCFEYNPRNTSEAKAGTRLQAFFHIQAQKLGLHVTPSNVDQVSTPPAAKKSRI</sequence>
<evidence type="ECO:0000250" key="1">
    <source>
        <dbReference type="UniProtKB" id="O88379"/>
    </source>
</evidence>
<evidence type="ECO:0000255" key="2"/>
<evidence type="ECO:0000255" key="3">
    <source>
        <dbReference type="PROSITE-ProRule" id="PRU00035"/>
    </source>
</evidence>
<evidence type="ECO:0000255" key="4">
    <source>
        <dbReference type="PROSITE-ProRule" id="PRU00063"/>
    </source>
</evidence>
<evidence type="ECO:0000255" key="5">
    <source>
        <dbReference type="PROSITE-ProRule" id="PRU00146"/>
    </source>
</evidence>
<evidence type="ECO:0000255" key="6">
    <source>
        <dbReference type="PROSITE-ProRule" id="PRU00475"/>
    </source>
</evidence>
<evidence type="ECO:0000256" key="7">
    <source>
        <dbReference type="SAM" id="MobiDB-lite"/>
    </source>
</evidence>
<evidence type="ECO:0000269" key="8">
    <source>
    </source>
</evidence>
<evidence type="ECO:0000269" key="9">
    <source>
    </source>
</evidence>
<evidence type="ECO:0000269" key="10">
    <source>
    </source>
</evidence>
<evidence type="ECO:0000269" key="11">
    <source>
    </source>
</evidence>
<evidence type="ECO:0000269" key="12">
    <source>
    </source>
</evidence>
<evidence type="ECO:0000269" key="13">
    <source>
    </source>
</evidence>
<evidence type="ECO:0000269" key="14">
    <source>
    </source>
</evidence>
<evidence type="ECO:0000269" key="15">
    <source>
    </source>
</evidence>
<evidence type="ECO:0000269" key="16">
    <source>
    </source>
</evidence>
<evidence type="ECO:0000303" key="17">
    <source>
    </source>
</evidence>
<evidence type="ECO:0000305" key="18"/>
<evidence type="ECO:0007744" key="19">
    <source>
    </source>
</evidence>
<evidence type="ECO:0007744" key="20">
    <source>
    </source>
</evidence>
<evidence type="ECO:0007744" key="21">
    <source>
    </source>
</evidence>
<evidence type="ECO:0007744" key="22">
    <source>
    </source>
</evidence>
<evidence type="ECO:0007744" key="23">
    <source>
    </source>
</evidence>
<evidence type="ECO:0007744" key="24">
    <source>
    </source>
</evidence>
<evidence type="ECO:0007744" key="25">
    <source>
    </source>
</evidence>
<evidence type="ECO:0007829" key="26">
    <source>
        <dbReference type="PDB" id="5UIY"/>
    </source>
</evidence>
<organism>
    <name type="scientific">Homo sapiens</name>
    <name type="common">Human</name>
    <dbReference type="NCBI Taxonomy" id="9606"/>
    <lineage>
        <taxon>Eukaryota</taxon>
        <taxon>Metazoa</taxon>
        <taxon>Chordata</taxon>
        <taxon>Craniata</taxon>
        <taxon>Vertebrata</taxon>
        <taxon>Euteleostomi</taxon>
        <taxon>Mammalia</taxon>
        <taxon>Eutheria</taxon>
        <taxon>Euarchontoglires</taxon>
        <taxon>Primates</taxon>
        <taxon>Haplorrhini</taxon>
        <taxon>Catarrhini</taxon>
        <taxon>Hominidae</taxon>
        <taxon>Homo</taxon>
    </lineage>
</organism>
<proteinExistence type="evidence at protein level"/>
<reference key="1">
    <citation type="journal article" date="2000" name="EMBO J.">
        <title>HuCHRAC, a human ISWI chromatin remodelling complex contains hACF1 and two novel histone-fold proteins.</title>
        <authorList>
            <person name="Poot R.A."/>
            <person name="Dellaire G."/>
            <person name="Huelsmann B.B."/>
            <person name="Grimaldi M.A."/>
            <person name="Corona D.F.V."/>
            <person name="Becker P.B."/>
            <person name="Bickmore W.A."/>
            <person name="Varga-Weisz P.D."/>
        </authorList>
    </citation>
    <scope>NUCLEOTIDE SEQUENCE [MRNA] (ISOFORM 1)</scope>
    <scope>IDENTIFICATION BY MASS SPECTROMETRY</scope>
    <scope>IDENTIFICATION IN THE CHRAC COMPLEX</scope>
    <scope>SUBCELLULAR LOCATION</scope>
    <scope>VARIANT LYS-1366</scope>
    <source>
        <tissue>Cervix carcinoma</tissue>
    </source>
</reference>
<reference key="2">
    <citation type="journal article" date="2000" name="Proc. Natl. Acad. Sci. U.S.A.">
        <title>A family of chromatin remodeling factors related to Williams syndrome transcription factor.</title>
        <authorList>
            <person name="Bochar D.A."/>
            <person name="Savard J."/>
            <person name="Wang W."/>
            <person name="Lafleur D.W."/>
            <person name="Moore P."/>
            <person name="Cote J."/>
            <person name="Shiekhattar R."/>
        </authorList>
    </citation>
    <scope>NUCLEOTIDE SEQUENCE [MRNA] (ISOFORM 2)</scope>
</reference>
<reference key="3">
    <citation type="journal article" date="2000" name="Genomics">
        <title>A novel family of bromodomain genes.</title>
        <authorList>
            <person name="Jones M.H."/>
            <person name="Hamana N."/>
            <person name="Nezu J."/>
            <person name="Shimane M."/>
        </authorList>
    </citation>
    <scope>NUCLEOTIDE SEQUENCE [MRNA] (ISOFORM 1)</scope>
    <source>
        <tissue>Testis</tissue>
    </source>
</reference>
<reference key="4">
    <citation type="journal article" date="2003" name="Nature">
        <title>The DNA sequence and analysis of human chromosome 14.</title>
        <authorList>
            <person name="Heilig R."/>
            <person name="Eckenberg R."/>
            <person name="Petit J.-L."/>
            <person name="Fonknechten N."/>
            <person name="Da Silva C."/>
            <person name="Cattolico L."/>
            <person name="Levy M."/>
            <person name="Barbe V."/>
            <person name="De Berardinis V."/>
            <person name="Ureta-Vidal A."/>
            <person name="Pelletier E."/>
            <person name="Vico V."/>
            <person name="Anthouard V."/>
            <person name="Rowen L."/>
            <person name="Madan A."/>
            <person name="Qin S."/>
            <person name="Sun H."/>
            <person name="Du H."/>
            <person name="Pepin K."/>
            <person name="Artiguenave F."/>
            <person name="Robert C."/>
            <person name="Cruaud C."/>
            <person name="Bruels T."/>
            <person name="Jaillon O."/>
            <person name="Friedlander L."/>
            <person name="Samson G."/>
            <person name="Brottier P."/>
            <person name="Cure S."/>
            <person name="Segurens B."/>
            <person name="Aniere F."/>
            <person name="Samain S."/>
            <person name="Crespeau H."/>
            <person name="Abbasi N."/>
            <person name="Aiach N."/>
            <person name="Boscus D."/>
            <person name="Dickhoff R."/>
            <person name="Dors M."/>
            <person name="Dubois I."/>
            <person name="Friedman C."/>
            <person name="Gouyvenoux M."/>
            <person name="James R."/>
            <person name="Madan A."/>
            <person name="Mairey-Estrada B."/>
            <person name="Mangenot S."/>
            <person name="Martins N."/>
            <person name="Menard M."/>
            <person name="Oztas S."/>
            <person name="Ratcliffe A."/>
            <person name="Shaffer T."/>
            <person name="Trask B."/>
            <person name="Vacherie B."/>
            <person name="Bellemere C."/>
            <person name="Belser C."/>
            <person name="Besnard-Gonnet M."/>
            <person name="Bartol-Mavel D."/>
            <person name="Boutard M."/>
            <person name="Briez-Silla S."/>
            <person name="Combette S."/>
            <person name="Dufosse-Laurent V."/>
            <person name="Ferron C."/>
            <person name="Lechaplais C."/>
            <person name="Louesse C."/>
            <person name="Muselet D."/>
            <person name="Magdelenat G."/>
            <person name="Pateau E."/>
            <person name="Petit E."/>
            <person name="Sirvain-Trukniewicz P."/>
            <person name="Trybou A."/>
            <person name="Vega-Czarny N."/>
            <person name="Bataille E."/>
            <person name="Bluet E."/>
            <person name="Bordelais I."/>
            <person name="Dubois M."/>
            <person name="Dumont C."/>
            <person name="Guerin T."/>
            <person name="Haffray S."/>
            <person name="Hammadi R."/>
            <person name="Muanga J."/>
            <person name="Pellouin V."/>
            <person name="Robert D."/>
            <person name="Wunderle E."/>
            <person name="Gauguet G."/>
            <person name="Roy A."/>
            <person name="Sainte-Marthe L."/>
            <person name="Verdier J."/>
            <person name="Verdier-Discala C."/>
            <person name="Hillier L.W."/>
            <person name="Fulton L."/>
            <person name="McPherson J."/>
            <person name="Matsuda F."/>
            <person name="Wilson R."/>
            <person name="Scarpelli C."/>
            <person name="Gyapay G."/>
            <person name="Wincker P."/>
            <person name="Saurin W."/>
            <person name="Quetier F."/>
            <person name="Waterston R."/>
            <person name="Hood L."/>
            <person name="Weissenbach J."/>
        </authorList>
    </citation>
    <scope>NUCLEOTIDE SEQUENCE [LARGE SCALE GENOMIC DNA]</scope>
</reference>
<reference key="5">
    <citation type="submission" date="2005-09" db="EMBL/GenBank/DDBJ databases">
        <authorList>
            <person name="Mural R.J."/>
            <person name="Istrail S."/>
            <person name="Sutton G.G."/>
            <person name="Florea L."/>
            <person name="Halpern A.L."/>
            <person name="Mobarry C.M."/>
            <person name="Lippert R."/>
            <person name="Walenz B."/>
            <person name="Shatkay H."/>
            <person name="Dew I."/>
            <person name="Miller J.R."/>
            <person name="Flanigan M.J."/>
            <person name="Edwards N.J."/>
            <person name="Bolanos R."/>
            <person name="Fasulo D."/>
            <person name="Halldorsson B.V."/>
            <person name="Hannenhalli S."/>
            <person name="Turner R."/>
            <person name="Yooseph S."/>
            <person name="Lu F."/>
            <person name="Nusskern D.R."/>
            <person name="Shue B.C."/>
            <person name="Zheng X.H."/>
            <person name="Zhong F."/>
            <person name="Delcher A.L."/>
            <person name="Huson D.H."/>
            <person name="Kravitz S.A."/>
            <person name="Mouchard L."/>
            <person name="Reinert K."/>
            <person name="Remington K.A."/>
            <person name="Clark A.G."/>
            <person name="Waterman M.S."/>
            <person name="Eichler E.E."/>
            <person name="Adams M.D."/>
            <person name="Hunkapiller M.W."/>
            <person name="Myers E.W."/>
            <person name="Venter J.C."/>
        </authorList>
    </citation>
    <scope>NUCLEOTIDE SEQUENCE [LARGE SCALE GENOMIC DNA]</scope>
</reference>
<reference key="6">
    <citation type="submission" date="1999-05" db="EMBL/GenBank/DDBJ databases">
        <title>Human partial CDS from CD34+ stem cells.</title>
        <authorList>
            <person name="Ye M."/>
            <person name="Zhang Q.-H."/>
            <person name="Zhou J."/>
            <person name="Shen Y."/>
            <person name="Wu X.-Y."/>
            <person name="Guan Z.Q."/>
            <person name="Wang L."/>
            <person name="Fan H.-Y."/>
            <person name="Mao Y.-F."/>
            <person name="Dai M."/>
            <person name="Huang Q.-H."/>
            <person name="Chen S.-J."/>
            <person name="Chen Z."/>
        </authorList>
    </citation>
    <scope>NUCLEOTIDE SEQUENCE [LARGE SCALE MRNA] OF 1-540 (ISOFORM 1)</scope>
    <source>
        <tissue>Umbilical cord blood</tissue>
    </source>
</reference>
<reference key="7">
    <citation type="journal article" date="2007" name="BMC Genomics">
        <title>The full-ORF clone resource of the German cDNA consortium.</title>
        <authorList>
            <person name="Bechtel S."/>
            <person name="Rosenfelder H."/>
            <person name="Duda A."/>
            <person name="Schmidt C.P."/>
            <person name="Ernst U."/>
            <person name="Wellenreuther R."/>
            <person name="Mehrle A."/>
            <person name="Schuster C."/>
            <person name="Bahr A."/>
            <person name="Bloecker H."/>
            <person name="Heubner D."/>
            <person name="Hoerlein A."/>
            <person name="Michel G."/>
            <person name="Wedler H."/>
            <person name="Koehrer K."/>
            <person name="Ottenwaelder B."/>
            <person name="Poustka A."/>
            <person name="Wiemann S."/>
            <person name="Schupp I."/>
        </authorList>
    </citation>
    <scope>NUCLEOTIDE SEQUENCE [LARGE SCALE MRNA] OF 746-1556 (ISOFORM 1)</scope>
    <scope>VARIANT LYS-1366</scope>
    <source>
        <tissue>Uterus</tissue>
    </source>
</reference>
<reference key="8">
    <citation type="journal article" date="2002" name="Nature">
        <title>A chromatin remodelling complex that loads cohesin onto human chromosomes.</title>
        <authorList>
            <person name="Hakimi M.-A."/>
            <person name="Bochar D.A."/>
            <person name="Schmiesing J.A."/>
            <person name="Dong Y."/>
            <person name="Barak O.G."/>
            <person name="Speicher D.W."/>
            <person name="Yokomori K."/>
            <person name="Shiekhattar R."/>
        </authorList>
    </citation>
    <scope>IDENTIFICATION IN THE ACF-5 ISWI CHROMATIN REMODELING COMPLEX</scope>
    <scope>INTERACTION WITH SMARCA5</scope>
</reference>
<reference key="9">
    <citation type="journal article" date="2002" name="Nat. Genet.">
        <title>An ACF1-ISWI chromatin-remodeling complex is required for DNA replication through heterochromatin.</title>
        <authorList>
            <person name="Collins N."/>
            <person name="Poot R.A."/>
            <person name="Kukimoto I."/>
            <person name="Garcia-Jimenez C."/>
            <person name="Dellaire G."/>
            <person name="Varga-Weisz P.D."/>
        </authorList>
    </citation>
    <scope>FUNCTION</scope>
    <scope>IDENTIFICATION IN THE CHRAC ISWI CHROMATIN REMODELING COMPLEX</scope>
    <scope>INTERACTION WITH SMARCA5; CHRAC1 AND POLE3</scope>
    <scope>MUTAGENESIS OF 667-ILE--LEU-933</scope>
</reference>
<reference key="10">
    <citation type="journal article" date="2004" name="Mol. Cell">
        <title>The histone-fold protein complex CHRAC-15/17 enhances nucleosome sliding and assembly mediated by ACF.</title>
        <authorList>
            <person name="Kukimoto I."/>
            <person name="Elderkin S."/>
            <person name="Grimaldi M."/>
            <person name="Oelgeschlager T."/>
            <person name="Varga-Weisz P.D."/>
        </authorList>
    </citation>
    <scope>FUNCTION</scope>
    <scope>IDENTIFICATION IN THE CHRAC ISWI CHROMATIN REMODELING COMPLEX</scope>
    <scope>INTERACTION WITH SMARCA5; POLE3 AND CHRAC1</scope>
    <scope>MUTAGENESIS OF 1-MET--ASN-128</scope>
</reference>
<reference key="11">
    <citation type="journal article" date="2006" name="Cell">
        <title>Global, in vivo, and site-specific phosphorylation dynamics in signaling networks.</title>
        <authorList>
            <person name="Olsen J.V."/>
            <person name="Blagoev B."/>
            <person name="Gnad F."/>
            <person name="Macek B."/>
            <person name="Kumar C."/>
            <person name="Mortensen P."/>
            <person name="Mann M."/>
        </authorList>
    </citation>
    <scope>PHOSPHORYLATION [LARGE SCALE ANALYSIS] AT SER-1413 AND SER-1417</scope>
    <scope>IDENTIFICATION BY MASS SPECTROMETRY [LARGE SCALE ANALYSIS]</scope>
    <source>
        <tissue>Cervix carcinoma</tissue>
    </source>
</reference>
<reference key="12">
    <citation type="journal article" date="2006" name="Nat. Struct. Mol. Biol.">
        <title>The chromatin-remodeling enzyme ACF is an ATP-dependent DNA length sensor that regulates nucleosome spacing.</title>
        <authorList>
            <person name="Yang J.G."/>
            <person name="Madrid T.S."/>
            <person name="Sevastopoulos E."/>
            <person name="Narlikar G.J."/>
        </authorList>
    </citation>
    <scope>FUNCTION</scope>
</reference>
<reference key="13">
    <citation type="journal article" date="2007" name="Mol. Endocrinol.">
        <title>Novel regulatory role for human Acf1 in transcriptional repression of vitamin D3 receptor-regulated genes.</title>
        <authorList>
            <person name="Ewing A.K."/>
            <person name="Attner M."/>
            <person name="Chakravarti D."/>
        </authorList>
    </citation>
    <scope>FUNCTION</scope>
    <scope>INTERACTION WITH NCOR1</scope>
</reference>
<reference key="14">
    <citation type="journal article" date="2008" name="Proc. Natl. Acad. Sci. U.S.A.">
        <title>A quantitative atlas of mitotic phosphorylation.</title>
        <authorList>
            <person name="Dephoure N."/>
            <person name="Zhou C."/>
            <person name="Villen J."/>
            <person name="Beausoleil S.A."/>
            <person name="Bakalarski C.E."/>
            <person name="Elledge S.J."/>
            <person name="Gygi S.P."/>
        </authorList>
    </citation>
    <scope>PHOSPHORYLATION [LARGE SCALE ANALYSIS] AT SER-1402; SER-1413 AND SER-1417</scope>
    <scope>IDENTIFICATION BY MASS SPECTROMETRY [LARGE SCALE ANALYSIS]</scope>
    <source>
        <tissue>Cervix carcinoma</tissue>
    </source>
</reference>
<reference key="15">
    <citation type="journal article" date="2009" name="Sci. Signal.">
        <title>Quantitative phosphoproteomic analysis of T cell receptor signaling reveals system-wide modulation of protein-protein interactions.</title>
        <authorList>
            <person name="Mayya V."/>
            <person name="Lundgren D.H."/>
            <person name="Hwang S.-I."/>
            <person name="Rezaul K."/>
            <person name="Wu L."/>
            <person name="Eng J.K."/>
            <person name="Rodionov V."/>
            <person name="Han D.K."/>
        </authorList>
    </citation>
    <scope>PHOSPHORYLATION [LARGE SCALE ANALYSIS] AT SER-270; SER-702 AND SER-960</scope>
    <scope>IDENTIFICATION BY MASS SPECTROMETRY [LARGE SCALE ANALYSIS]</scope>
    <source>
        <tissue>Leukemic T-cell</tissue>
    </source>
</reference>
<reference key="16">
    <citation type="journal article" date="2010" name="Sci. Signal.">
        <title>Quantitative phosphoproteomics reveals widespread full phosphorylation site occupancy during mitosis.</title>
        <authorList>
            <person name="Olsen J.V."/>
            <person name="Vermeulen M."/>
            <person name="Santamaria A."/>
            <person name="Kumar C."/>
            <person name="Miller M.L."/>
            <person name="Jensen L.J."/>
            <person name="Gnad F."/>
            <person name="Cox J."/>
            <person name="Jensen T.S."/>
            <person name="Nigg E.A."/>
            <person name="Brunak S."/>
            <person name="Mann M."/>
        </authorList>
    </citation>
    <scope>PHOSPHORYLATION [LARGE SCALE ANALYSIS] AT SER-270; SER-1371 AND SER-1402</scope>
    <scope>IDENTIFICATION BY MASS SPECTROMETRY [LARGE SCALE ANALYSIS]</scope>
    <source>
        <tissue>Cervix carcinoma</tissue>
    </source>
</reference>
<reference key="17">
    <citation type="journal article" date="2011" name="BMC Syst. Biol.">
        <title>Initial characterization of the human central proteome.</title>
        <authorList>
            <person name="Burkard T.R."/>
            <person name="Planyavsky M."/>
            <person name="Kaupe I."/>
            <person name="Breitwieser F.P."/>
            <person name="Buerckstuemmer T."/>
            <person name="Bennett K.L."/>
            <person name="Superti-Furga G."/>
            <person name="Colinge J."/>
        </authorList>
    </citation>
    <scope>IDENTIFICATION BY MASS SPECTROMETRY [LARGE SCALE ANALYSIS]</scope>
</reference>
<reference key="18">
    <citation type="journal article" date="2011" name="Sci. Signal.">
        <title>System-wide temporal characterization of the proteome and phosphoproteome of human embryonic stem cell differentiation.</title>
        <authorList>
            <person name="Rigbolt K.T."/>
            <person name="Prokhorova T.A."/>
            <person name="Akimov V."/>
            <person name="Henningsen J."/>
            <person name="Johansen P.T."/>
            <person name="Kratchmarova I."/>
            <person name="Kassem M."/>
            <person name="Mann M."/>
            <person name="Olsen J.V."/>
            <person name="Blagoev B."/>
        </authorList>
    </citation>
    <scope>PHOSPHORYLATION [LARGE SCALE ANALYSIS] AT THR-731; SER-1281; SER-1339 AND SER-1413</scope>
    <scope>IDENTIFICATION BY MASS SPECTROMETRY [LARGE SCALE ANALYSIS]</scope>
</reference>
<reference key="19">
    <citation type="journal article" date="2013" name="J. Proteome Res.">
        <title>Toward a comprehensive characterization of a human cancer cell phosphoproteome.</title>
        <authorList>
            <person name="Zhou H."/>
            <person name="Di Palma S."/>
            <person name="Preisinger C."/>
            <person name="Peng M."/>
            <person name="Polat A.N."/>
            <person name="Heck A.J."/>
            <person name="Mohammed S."/>
        </authorList>
    </citation>
    <scope>PHOSPHORYLATION [LARGE SCALE ANALYSIS] AT THR-731; SER-961; SER-1281; SER-1320; SER-1339; SER-1353; SER-1363; SER-1413; SER-1417 AND THR-1547</scope>
    <scope>IDENTIFICATION BY MASS SPECTROMETRY [LARGE SCALE ANALYSIS]</scope>
    <source>
        <tissue>Cervix carcinoma</tissue>
        <tissue>Erythroleukemia</tissue>
    </source>
</reference>
<reference key="20">
    <citation type="journal article" date="2015" name="Genes Dev.">
        <title>Screen identifies bromodomain protein ZMYND8 in chromatin recognition of transcription-associated DNA damage that promotes homologous recombination.</title>
        <authorList>
            <person name="Gong F."/>
            <person name="Chiu L.Y."/>
            <person name="Cox B."/>
            <person name="Aymard F."/>
            <person name="Clouaire T."/>
            <person name="Leung J.W."/>
            <person name="Cammarata M."/>
            <person name="Perez M."/>
            <person name="Agarwal P."/>
            <person name="Brodbelt J.S."/>
            <person name="Legube G."/>
            <person name="Miller K.M."/>
        </authorList>
    </citation>
    <scope>SUBCELLULAR LOCATION</scope>
</reference>
<reference key="21">
    <citation type="journal article" date="2017" name="EMBO Rep.">
        <title>Expansion of the ISWI chromatin remodeler family with new active complexes.</title>
        <authorList>
            <person name="Oppikofer M."/>
            <person name="Bai T."/>
            <person name="Gan Y."/>
            <person name="Haley B."/>
            <person name="Liu P."/>
            <person name="Sandoval W."/>
            <person name="Ciferri C."/>
            <person name="Cochran A.G."/>
        </authorList>
    </citation>
    <scope>FUNCTION</scope>
    <scope>IDENTIFICATION IN THE ACF-1 ISWI CHROMATIN REMODELING COMPLEX</scope>
    <scope>IDENTIFICATION IN THE ACF-5 ISWI CHROMATIN REMODELING COMPLEX</scope>
    <scope>INTERACTION WITH SMARCA1 AND SMARCA5</scope>
</reference>
<reference key="22">
    <citation type="journal article" date="2017" name="Nat. Struct. Mol. Biol.">
        <title>Site-specific mapping of the human SUMO proteome reveals co-modification with phosphorylation.</title>
        <authorList>
            <person name="Hendriks I.A."/>
            <person name="Lyon D."/>
            <person name="Young C."/>
            <person name="Jensen L.J."/>
            <person name="Vertegaal A.C."/>
            <person name="Nielsen M.L."/>
        </authorList>
    </citation>
    <scope>SUMOYLATION [LARGE SCALE ANALYSIS] AT LYS-952</scope>
    <scope>IDENTIFICATION BY MASS SPECTROMETRY [LARGE SCALE ANALYSIS]</scope>
</reference>
<comment type="function">
    <text evidence="10 11 12 13 16">Regulatory subunit of the ATP-dependent ACF-1 and ACF-5 ISWI chromatin remodeling complexes, which form ordered nucleosome arrays on chromatin and slide edge- and center-positioned histone octamers away from their original location on the DNA template to facilitate access to DNA during DNA-templated processes such as DNA replication, transcription, and repair (PubMed:17099699, PubMed:28801535). Both complexes regulate the spacing of nucleosomes along the chromatin and have the ability to slide mononucleosomes to the center of a DNA template in an ATP-dependent manner (PubMed:14759371, PubMed:17099699, PubMed:28801535). The ACF-1 ISWI chromatin remodeling complex has a lower ATP hydrolysis rate than the ACF-5 ISWI chromatin remodeling complex (PubMed:28801535). Has a role in sensing the length of DNA which flank nucleosomes, which modulates the nucleosome spacing activity of the ACF-5 ISWI chromatin remodeling complex (PubMed:17099699). Involved in DNA replication and together with SMARCA5/SNF2H is required for replication of pericentric heterochromatin in S-phase (PubMed:12434153). May have a role in nuclear receptor-mediated transcription repression (PubMed:17519354).</text>
</comment>
<comment type="subunit">
    <text evidence="8 9 10 11 13 16">Component of the ACF-1 ISWI chromatin remodeling complex at least composed of SMARCA1 and BAZ1A, which regulates the spacing of histone octamers on the DNA template to facilitate access to DNA (PubMed:28801535). Within the ACF-1 ISWI chromatin remodeling complex interacts with SMARCA1; the interaction is direct (PubMed:28801535). Component of the ACF-5 ISWI chromatin remodeling complex (also called the ACF complex) at least composed of BAZ1A and SMARCA5/SNF2H, which regulates the spacing of histone octamers on the DNA template to facilitate access to DNA (PubMed:10880450, PubMed:12198550, PubMed:28801535). Within the ACF-5 ISWI chromatin remodeling complex interacts with SMARCA5/SNF2H; the interaction is direct (PubMed:10880450, PubMed:12198550, PubMed:28801535). Component of the CHRAC ISWI chromatin remodeling complex at least composed of SMARCA5/SNF2H, BAZ1A/ACF1, CHRAC1 and POLE3; the complex preferentially binds DNA through the CHRAC1-POLE3 heterodimer and possesses ATP-dependent nucleosome-remodeling activity (PubMed:10880450, PubMed:12434153, PubMed:14759371). Within the complex interacts (via N-terminus) with POLE3-CHRAC1 heterodimer; the interaction is direct and is required for the complex to preferentially bind to DNA (PubMed:10880450, PubMed:12434153, PubMed:14759371). Within the complex interacts with SMARCA5/SNF2H; the interaction is direct and promotes the interaction with the POLE3-CHRAC1 heterodimer (PubMed:10880450, PubMed:12434153, PubMed:14759371). Interacts with NCOR1 (via its RD1 domain); the interaction corepresses a number of NCOR1-regulated genes (PubMed:17519354).</text>
</comment>
<comment type="interaction">
    <interactant intactId="EBI-927511">
        <id>Q9NRL2</id>
    </interactant>
    <interactant intactId="EBI-466029">
        <id>P42858</id>
        <label>HTT</label>
    </interactant>
    <organismsDiffer>false</organismsDiffer>
    <experiments>4</experiments>
</comment>
<comment type="interaction">
    <interactant intactId="EBI-927511">
        <id>Q9NRL2</id>
    </interactant>
    <interactant intactId="EBI-352588">
        <id>O60264</id>
        <label>SMARCA5</label>
    </interactant>
    <organismsDiffer>false</organismsDiffer>
    <experiments>4</experiments>
</comment>
<comment type="interaction">
    <interactant intactId="EBI-927511">
        <id>Q9NRL2</id>
    </interactant>
    <interactant intactId="EBI-2795384">
        <id>O95365</id>
        <label>ZBTB7A</label>
    </interactant>
    <organismsDiffer>false</organismsDiffer>
    <experiments>2</experiments>
</comment>
<comment type="subcellular location">
    <subcellularLocation>
        <location evidence="8 15">Nucleus</location>
    </subcellularLocation>
    <text evidence="1 8 15">Localizes to pericentric heterochromatin (By similarity). May target the CHRAC complex to heterochromatin (PubMed:10880450). Localizes to sites of DNA damage (PubMed:25593309).</text>
</comment>
<comment type="alternative products">
    <event type="alternative splicing"/>
    <isoform>
        <id>Q9NRL2-1</id>
        <name>1</name>
        <sequence type="displayed"/>
    </isoform>
    <isoform>
        <id>Q9NRL2-2</id>
        <name>2</name>
        <sequence type="described" ref="VSP_000551"/>
    </isoform>
</comment>
<comment type="tissue specificity">
    <text>Highly expressed in testis and at low or undetectable levels in other tissues analyzed.</text>
</comment>
<comment type="miscellaneous">
    <text>Stimulated by double-stranded DNA and nucleosomal DNA.</text>
</comment>
<comment type="similarity">
    <text evidence="18">Belongs to the WAL family.</text>
</comment>
<comment type="sequence caution" evidence="18">
    <conflict type="frameshift">
        <sequence resource="EMBL-CDS" id="AAF28995"/>
    </conflict>
</comment>
<feature type="chain" id="PRO_0000211167" description="Bromodomain adjacent to zinc finger domain protein 1A">
    <location>
        <begin position="1"/>
        <end position="1556"/>
    </location>
</feature>
<feature type="domain" description="WAC" evidence="6">
    <location>
        <begin position="22"/>
        <end position="128"/>
    </location>
</feature>
<feature type="domain" description="DDT" evidence="4">
    <location>
        <begin position="422"/>
        <end position="487"/>
    </location>
</feature>
<feature type="domain" description="Bromo" evidence="3">
    <location>
        <begin position="1430"/>
        <end position="1533"/>
    </location>
</feature>
<feature type="zinc finger region" description="PHD-type" evidence="5">
    <location>
        <begin position="1148"/>
        <end position="1198"/>
    </location>
</feature>
<feature type="region of interest" description="Required for interaction with NCOR1" evidence="13">
    <location>
        <begin position="1"/>
        <end position="133"/>
    </location>
</feature>
<feature type="region of interest" description="Required for interaction with the CHRAC1-POLE3 heterodimer. Required for interaction with the CHRAC1-POLE3 heterodimer" evidence="11">
    <location>
        <begin position="1"/>
        <end position="128"/>
    </location>
</feature>
<feature type="region of interest" description="Disordered" evidence="7">
    <location>
        <begin position="662"/>
        <end position="754"/>
    </location>
</feature>
<feature type="region of interest" description="Required for interaction with SMARCA5 and formation of the CHRAC ISWI chromatin remodeling complex" evidence="10">
    <location>
        <begin position="667"/>
        <end position="933"/>
    </location>
</feature>
<feature type="region of interest" description="Disordered" evidence="7">
    <location>
        <begin position="841"/>
        <end position="877"/>
    </location>
</feature>
<feature type="region of interest" description="Disordered" evidence="7">
    <location>
        <begin position="941"/>
        <end position="966"/>
    </location>
</feature>
<feature type="region of interest" description="Disordered" evidence="7">
    <location>
        <begin position="1202"/>
        <end position="1376"/>
    </location>
</feature>
<feature type="region of interest" description="Disordered" evidence="7">
    <location>
        <begin position="1399"/>
        <end position="1431"/>
    </location>
</feature>
<feature type="coiled-coil region" evidence="2">
    <location>
        <begin position="306"/>
        <end position="397"/>
    </location>
</feature>
<feature type="coiled-coil region" evidence="2">
    <location>
        <begin position="634"/>
        <end position="709"/>
    </location>
</feature>
<feature type="compositionally biased region" description="Basic and acidic residues" evidence="7">
    <location>
        <begin position="662"/>
        <end position="695"/>
    </location>
</feature>
<feature type="compositionally biased region" description="Acidic residues" evidence="7">
    <location>
        <begin position="703"/>
        <end position="713"/>
    </location>
</feature>
<feature type="compositionally biased region" description="Basic and acidic residues" evidence="7">
    <location>
        <begin position="715"/>
        <end position="726"/>
    </location>
</feature>
<feature type="compositionally biased region" description="Acidic residues" evidence="7">
    <location>
        <begin position="727"/>
        <end position="736"/>
    </location>
</feature>
<feature type="compositionally biased region" description="Polar residues" evidence="7">
    <location>
        <begin position="842"/>
        <end position="872"/>
    </location>
</feature>
<feature type="compositionally biased region" description="Polar residues" evidence="7">
    <location>
        <begin position="951"/>
        <end position="965"/>
    </location>
</feature>
<feature type="compositionally biased region" description="Acidic residues" evidence="7">
    <location>
        <begin position="1213"/>
        <end position="1258"/>
    </location>
</feature>
<feature type="compositionally biased region" description="Basic residues" evidence="7">
    <location>
        <begin position="1262"/>
        <end position="1276"/>
    </location>
</feature>
<feature type="compositionally biased region" description="Polar residues" evidence="7">
    <location>
        <begin position="1277"/>
        <end position="1312"/>
    </location>
</feature>
<feature type="compositionally biased region" description="Polar residues" evidence="7">
    <location>
        <begin position="1363"/>
        <end position="1374"/>
    </location>
</feature>
<feature type="modified residue" description="Phosphoserine" evidence="21 22">
    <location>
        <position position="270"/>
    </location>
</feature>
<feature type="modified residue" description="Phosphoserine" evidence="21">
    <location>
        <position position="702"/>
    </location>
</feature>
<feature type="modified residue" description="Phosphothreonine" evidence="23 24">
    <location>
        <position position="731"/>
    </location>
</feature>
<feature type="modified residue" description="Phosphoserine" evidence="1">
    <location>
        <position position="960"/>
    </location>
</feature>
<feature type="modified residue" description="Phosphoserine" evidence="24">
    <location>
        <position position="961"/>
    </location>
</feature>
<feature type="modified residue" description="Phosphoserine" evidence="23 24">
    <location>
        <position position="1281"/>
    </location>
</feature>
<feature type="modified residue" description="Phosphoserine" evidence="24">
    <location>
        <position position="1320"/>
    </location>
</feature>
<feature type="modified residue" description="Phosphoserine" evidence="1">
    <location>
        <position position="1339"/>
    </location>
</feature>
<feature type="modified residue" description="Phosphoserine" evidence="1">
    <location>
        <position position="1353"/>
    </location>
</feature>
<feature type="modified residue" description="Phosphoserine" evidence="24">
    <location>
        <position position="1363"/>
    </location>
</feature>
<feature type="modified residue" description="Phosphoserine" evidence="22">
    <location>
        <position position="1371"/>
    </location>
</feature>
<feature type="modified residue" description="Phosphoserine" evidence="20 22">
    <location>
        <position position="1402"/>
    </location>
</feature>
<feature type="modified residue" description="Phosphoserine" evidence="19 20 23 24">
    <location>
        <position position="1413"/>
    </location>
</feature>
<feature type="modified residue" description="Phosphoserine" evidence="19 20 24">
    <location>
        <position position="1417"/>
    </location>
</feature>
<feature type="modified residue" description="Phosphothreonine" evidence="24">
    <location>
        <position position="1547"/>
    </location>
</feature>
<feature type="cross-link" description="Glycyl lysine isopeptide (Lys-Gly) (interchain with G-Cter in SUMO2)" evidence="25">
    <location>
        <position position="952"/>
    </location>
</feature>
<feature type="splice variant" id="VSP_000551" description="In isoform 2." evidence="17">
    <location>
        <begin position="504"/>
        <end position="535"/>
    </location>
</feature>
<feature type="sequence variant" id="VAR_028049" description="In dbSNP:rs1133285.">
    <original>D</original>
    <variation>E</variation>
    <location>
        <position position="344"/>
    </location>
</feature>
<feature type="sequence variant" id="VAR_048423" description="In dbSNP:rs1044140." evidence="8 14">
    <original>N</original>
    <variation>K</variation>
    <location>
        <position position="1366"/>
    </location>
</feature>
<feature type="mutagenesis site" description="Abolishes interaction with the CHRAC1-POLE3 heterodimer." evidence="11">
    <location>
        <begin position="1"/>
        <end position="128"/>
    </location>
</feature>
<feature type="mutagenesis site" description="Abolishes interaction with SMARCA5/SNF2H, and abolishes the formation of the CHRAC ISWI chromatin remodeling complex." evidence="10">
    <location>
        <begin position="667"/>
        <end position="933"/>
    </location>
</feature>
<feature type="sequence conflict" description="In Ref. 3; BAA89209." evidence="18" ref="3">
    <original>R</original>
    <variation>T</variation>
    <location>
        <position position="135"/>
    </location>
</feature>
<feature type="sequence conflict" description="In Ref. 3; BAA89209." evidence="18" ref="3">
    <original>D</original>
    <variation>E</variation>
    <location>
        <position position="236"/>
    </location>
</feature>
<feature type="sequence conflict" description="In Ref. 6; AAF28995." evidence="18" ref="6">
    <original>K</original>
    <variation>Q</variation>
    <location>
        <position position="494"/>
    </location>
</feature>
<feature type="sequence conflict" description="In Ref. 6; AAF28995." evidence="18" ref="6">
    <original>KDLTEA</original>
    <variation>QDFTEP</variation>
    <location>
        <begin position="503"/>
        <end position="508"/>
    </location>
</feature>
<feature type="sequence conflict" description="In Ref. 6; AAF28995." evidence="18" ref="6">
    <original>S</original>
    <variation>P</variation>
    <location>
        <position position="525"/>
    </location>
</feature>
<feature type="sequence conflict" description="In Ref. 6; AAF28995." evidence="18" ref="6">
    <original>GCSLK</original>
    <variation>AALKF</variation>
    <location>
        <begin position="536"/>
        <end position="540"/>
    </location>
</feature>
<feature type="sequence conflict" description="In Ref. 1; AAF70601." evidence="18" ref="1">
    <original>E</original>
    <variation>D</variation>
    <location>
        <position position="551"/>
    </location>
</feature>
<feature type="sequence conflict" description="In Ref. 3; BAA89209." evidence="18" ref="3">
    <original>V</original>
    <variation>F</variation>
    <location>
        <position position="730"/>
    </location>
</feature>
<feature type="sequence conflict" description="In Ref. 3; BAA89209." evidence="18" ref="3">
    <original>P</original>
    <variation>L</variation>
    <location>
        <position position="769"/>
    </location>
</feature>
<feature type="sequence conflict" description="In Ref. 3; BAA89209." evidence="18" ref="3">
    <original>S</original>
    <variation>C</variation>
    <location>
        <position position="1201"/>
    </location>
</feature>
<feature type="sequence conflict" description="In Ref. 3; BAA89209." evidence="18" ref="3">
    <original>S</original>
    <variation>F</variation>
    <location>
        <position position="1206"/>
    </location>
</feature>
<feature type="sequence conflict" description="In Ref. 1; AAF70601 and 7; CAB43261." evidence="18" ref="1 7">
    <original>R</original>
    <variation>K</variation>
    <location>
        <position position="1409"/>
    </location>
</feature>
<feature type="helix" evidence="26">
    <location>
        <begin position="1436"/>
        <end position="1447"/>
    </location>
</feature>
<feature type="helix" evidence="26">
    <location>
        <begin position="1449"/>
        <end position="1454"/>
    </location>
</feature>
<feature type="turn" evidence="26">
    <location>
        <begin position="1460"/>
        <end position="1462"/>
    </location>
</feature>
<feature type="helix" evidence="26">
    <location>
        <begin position="1466"/>
        <end position="1469"/>
    </location>
</feature>
<feature type="helix" evidence="26">
    <location>
        <begin position="1476"/>
        <end position="1484"/>
    </location>
</feature>
<feature type="helix" evidence="26">
    <location>
        <begin position="1491"/>
        <end position="1508"/>
    </location>
</feature>
<feature type="helix" evidence="26">
    <location>
        <begin position="1514"/>
        <end position="1532"/>
    </location>
</feature>